<organism>
    <name type="scientific">Verasper moseri</name>
    <name type="common">Barfin flounder</name>
    <dbReference type="NCBI Taxonomy" id="98923"/>
    <lineage>
        <taxon>Eukaryota</taxon>
        <taxon>Metazoa</taxon>
        <taxon>Chordata</taxon>
        <taxon>Craniata</taxon>
        <taxon>Vertebrata</taxon>
        <taxon>Euteleostomi</taxon>
        <taxon>Actinopterygii</taxon>
        <taxon>Neopterygii</taxon>
        <taxon>Teleostei</taxon>
        <taxon>Neoteleostei</taxon>
        <taxon>Acanthomorphata</taxon>
        <taxon>Carangaria</taxon>
        <taxon>Pleuronectiformes</taxon>
        <taxon>Pleuronectoidei</taxon>
        <taxon>Pleuronectidae</taxon>
        <taxon>Verasper</taxon>
    </lineage>
</organism>
<evidence type="ECO:0000250" key="1"/>
<evidence type="ECO:0000255" key="2"/>
<evidence type="ECO:0000269" key="3">
    <source>
    </source>
</evidence>
<evidence type="ECO:0000305" key="4"/>
<proteinExistence type="evidence at transcript level"/>
<gene>
    <name type="primary">gnrh1</name>
</gene>
<dbReference type="EMBL" id="AB066360">
    <property type="protein sequence ID" value="BAB83984.1"/>
    <property type="molecule type" value="mRNA"/>
</dbReference>
<dbReference type="GO" id="GO:0005576">
    <property type="term" value="C:extracellular region"/>
    <property type="evidence" value="ECO:0000250"/>
    <property type="project" value="UniProtKB"/>
</dbReference>
<dbReference type="GO" id="GO:0005615">
    <property type="term" value="C:extracellular space"/>
    <property type="evidence" value="ECO:0000250"/>
    <property type="project" value="UniProtKB"/>
</dbReference>
<dbReference type="GO" id="GO:0005183">
    <property type="term" value="F:gonadotropin hormone-releasing hormone activity"/>
    <property type="evidence" value="ECO:0000250"/>
    <property type="project" value="UniProtKB"/>
</dbReference>
<dbReference type="GO" id="GO:0031530">
    <property type="term" value="F:gonadotropin-releasing hormone receptor binding"/>
    <property type="evidence" value="ECO:0007669"/>
    <property type="project" value="TreeGrafter"/>
</dbReference>
<dbReference type="InterPro" id="IPR002012">
    <property type="entry name" value="GnRH"/>
</dbReference>
<dbReference type="InterPro" id="IPR019792">
    <property type="entry name" value="Gonadoliberin"/>
</dbReference>
<dbReference type="InterPro" id="IPR004079">
    <property type="entry name" value="Gonadoliberin_I_precursor"/>
</dbReference>
<dbReference type="PANTHER" id="PTHR10522">
    <property type="entry name" value="GONADOLIBERIN"/>
    <property type="match status" value="1"/>
</dbReference>
<dbReference type="PANTHER" id="PTHR10522:SF0">
    <property type="entry name" value="PROGONADOLIBERIN-1"/>
    <property type="match status" value="1"/>
</dbReference>
<dbReference type="PRINTS" id="PR01541">
    <property type="entry name" value="GONADOLIBRNI"/>
</dbReference>
<dbReference type="PROSITE" id="PS00473">
    <property type="entry name" value="GNRH"/>
    <property type="match status" value="1"/>
</dbReference>
<accession>Q8UW80</accession>
<protein>
    <recommendedName>
        <fullName>Progonadoliberin-1</fullName>
    </recommendedName>
    <alternativeName>
        <fullName>Progonadoliberin I</fullName>
    </alternativeName>
    <alternativeName>
        <fullName>Seabream-type gonadotropin-releasing hormone</fullName>
        <shortName>SbGnRH</shortName>
    </alternativeName>
    <component>
        <recommendedName>
            <fullName>Gonadoliberin-1</fullName>
        </recommendedName>
        <alternativeName>
            <fullName>Gonadoliberin I</fullName>
        </alternativeName>
        <alternativeName>
            <fullName>Gonadotropin-releasing hormone I</fullName>
            <shortName>GnRH-I</shortName>
        </alternativeName>
        <alternativeName>
            <fullName>Luliberin I</fullName>
        </alternativeName>
        <alternativeName>
            <fullName>Luteinizing hormone-releasing hormone I</fullName>
            <shortName>LH-RH I</shortName>
        </alternativeName>
    </component>
    <component>
        <recommendedName>
            <fullName>GnRH-associated peptide 1</fullName>
        </recommendedName>
        <alternativeName>
            <fullName>GnRH-associated peptide I</fullName>
        </alternativeName>
    </component>
</protein>
<name>GON1_VERMO</name>
<sequence>MHRKMAVKTLSVWLLLVGTLVPQHCCQHWSYGLSPGGKRQLDSLSQTLGNVVEEFPRVDSPCSVLGGAEESPFAGIYRMKGFLGSITDRGNRTQNI</sequence>
<comment type="function">
    <text evidence="1">Stimulates the secretion of gonadotropins.</text>
</comment>
<comment type="subcellular location">
    <subcellularLocation>
        <location>Secreted</location>
    </subcellularLocation>
</comment>
<comment type="tissue specificity">
    <text evidence="3">Preoptic area of the brain.</text>
</comment>
<comment type="similarity">
    <text evidence="4">Belongs to the GnRH family.</text>
</comment>
<keyword id="KW-0027">Amidation</keyword>
<keyword id="KW-0165">Cleavage on pair of basic residues</keyword>
<keyword id="KW-0372">Hormone</keyword>
<keyword id="KW-0873">Pyrrolidone carboxylic acid</keyword>
<keyword id="KW-0964">Secreted</keyword>
<keyword id="KW-0732">Signal</keyword>
<feature type="signal peptide" evidence="2">
    <location>
        <begin position="1"/>
        <end position="26"/>
    </location>
</feature>
<feature type="chain" id="PRO_0000012447" description="Progonadoliberin-1">
    <location>
        <begin position="27"/>
        <end position="96"/>
    </location>
</feature>
<feature type="peptide" id="PRO_0000012448" description="Gonadoliberin-1">
    <location>
        <begin position="27"/>
        <end position="36"/>
    </location>
</feature>
<feature type="peptide" id="PRO_0000012449" description="GnRH-associated peptide 1" evidence="2">
    <location>
        <begin position="40"/>
        <end position="96"/>
    </location>
</feature>
<feature type="modified residue" description="Pyrrolidone carboxylic acid" evidence="1">
    <location>
        <position position="27"/>
    </location>
</feature>
<feature type="modified residue" description="Glycine amide" evidence="1">
    <location>
        <position position="36"/>
    </location>
</feature>
<reference key="1">
    <citation type="journal article" date="2002" name="Gen. Comp. Endocrinol.">
        <title>Molecular cloning of three cDNAs encoding different GnRHs in the brain of barfin flounder.</title>
        <authorList>
            <person name="Amano M."/>
            <person name="Takahashi A."/>
            <person name="Yamanome T."/>
            <person name="Okubo K."/>
            <person name="Aida K."/>
            <person name="Yamamori K."/>
        </authorList>
    </citation>
    <scope>NUCLEOTIDE SEQUENCE [MRNA]</scope>
    <scope>TISSUE SPECIFICITY</scope>
    <source>
        <tissue>Brain</tissue>
    </source>
</reference>